<evidence type="ECO:0000250" key="1"/>
<evidence type="ECO:0000255" key="2"/>
<evidence type="ECO:0000256" key="3">
    <source>
        <dbReference type="SAM" id="MobiDB-lite"/>
    </source>
</evidence>
<evidence type="ECO:0000305" key="4"/>
<gene>
    <name type="primary">MED21</name>
    <name type="ORF">AGAP002247</name>
</gene>
<sequence length="154" mass="17514">MADRLTQLQDTVNQQAEHFCNSIGILQQCSVPSKFAGFERTGSQTPQQQVHQQQQLPQQQQQQQQPQQQEDFPQLFSTLISRCAKDIDTLIESLPSEESSIELQVQSLQRLEAENKESAEKLEEIVRKGELLLEKIQAALSDIAQSQLDMQYSS</sequence>
<keyword id="KW-0010">Activator</keyword>
<keyword id="KW-0175">Coiled coil</keyword>
<keyword id="KW-0539">Nucleus</keyword>
<keyword id="KW-1185">Reference proteome</keyword>
<keyword id="KW-0804">Transcription</keyword>
<keyword id="KW-0805">Transcription regulation</keyword>
<organism>
    <name type="scientific">Anopheles gambiae</name>
    <name type="common">African malaria mosquito</name>
    <dbReference type="NCBI Taxonomy" id="7165"/>
    <lineage>
        <taxon>Eukaryota</taxon>
        <taxon>Metazoa</taxon>
        <taxon>Ecdysozoa</taxon>
        <taxon>Arthropoda</taxon>
        <taxon>Hexapoda</taxon>
        <taxon>Insecta</taxon>
        <taxon>Pterygota</taxon>
        <taxon>Neoptera</taxon>
        <taxon>Endopterygota</taxon>
        <taxon>Diptera</taxon>
        <taxon>Nematocera</taxon>
        <taxon>Culicoidea</taxon>
        <taxon>Culicidae</taxon>
        <taxon>Anophelinae</taxon>
        <taxon>Anopheles</taxon>
    </lineage>
</organism>
<comment type="function">
    <text evidence="1">Component of the Mediator complex, a coactivator involved in the regulated transcription of nearly all RNA polymerase II-dependent genes. Mediator functions as a bridge to convey information from gene-specific regulatory proteins to the basal RNA polymerase II transcription machinery. Mediator is recruited to promoters by direct interactions with regulatory proteins and serves as a scaffold for the assembly of a functional preinitiation complex with RNA polymerase II and the general transcription factors (By similarity).</text>
</comment>
<comment type="subunit">
    <text evidence="1">Component of the Mediator complex.</text>
</comment>
<comment type="subcellular location">
    <subcellularLocation>
        <location evidence="4">Nucleus</location>
    </subcellularLocation>
</comment>
<comment type="similarity">
    <text evidence="4">Belongs to the Mediator complex subunit 21 family.</text>
</comment>
<proteinExistence type="inferred from homology"/>
<protein>
    <recommendedName>
        <fullName>Mediator of RNA polymerase II transcription subunit 21</fullName>
    </recommendedName>
    <alternativeName>
        <fullName>Mediator complex subunit 21</fullName>
    </alternativeName>
</protein>
<name>MED21_ANOGA</name>
<dbReference type="EMBL" id="AAAB01008799">
    <property type="protein sequence ID" value="EAA03755.6"/>
    <property type="molecule type" value="Genomic_DNA"/>
</dbReference>
<dbReference type="SMR" id="Q7PTL0"/>
<dbReference type="FunCoup" id="Q7PTL0">
    <property type="interactions" value="1368"/>
</dbReference>
<dbReference type="STRING" id="7165.Q7PTL0"/>
<dbReference type="PaxDb" id="7165-AGAP002247-PA"/>
<dbReference type="EnsemblMetazoa" id="AGAP002247-RA">
    <property type="protein sequence ID" value="AGAP002247-PA"/>
    <property type="gene ID" value="AGAP002247"/>
</dbReference>
<dbReference type="GeneID" id="1269314"/>
<dbReference type="KEGG" id="aga:1269314"/>
<dbReference type="CTD" id="9412"/>
<dbReference type="VEuPathDB" id="VectorBase:AGAMI1_007118"/>
<dbReference type="VEuPathDB" id="VectorBase:AGAP002247"/>
<dbReference type="eggNOG" id="KOG1510">
    <property type="taxonomic scope" value="Eukaryota"/>
</dbReference>
<dbReference type="HOGENOM" id="CLU_126757_0_0_1"/>
<dbReference type="InParanoid" id="Q7PTL0"/>
<dbReference type="OMA" id="DSFPIEA"/>
<dbReference type="PhylomeDB" id="Q7PTL0"/>
<dbReference type="Proteomes" id="UP000007062">
    <property type="component" value="Chromosome 2R"/>
</dbReference>
<dbReference type="GO" id="GO:0016592">
    <property type="term" value="C:mediator complex"/>
    <property type="evidence" value="ECO:0000318"/>
    <property type="project" value="GO_Central"/>
</dbReference>
<dbReference type="GO" id="GO:0003712">
    <property type="term" value="F:transcription coregulator activity"/>
    <property type="evidence" value="ECO:0000318"/>
    <property type="project" value="GO_Central"/>
</dbReference>
<dbReference type="GO" id="GO:0006357">
    <property type="term" value="P:regulation of transcription by RNA polymerase II"/>
    <property type="evidence" value="ECO:0000318"/>
    <property type="project" value="GO_Central"/>
</dbReference>
<dbReference type="Gene3D" id="6.10.280.10">
    <property type="entry name" value="Mediator complex, subunit Med21"/>
    <property type="match status" value="1"/>
</dbReference>
<dbReference type="InterPro" id="IPR037212">
    <property type="entry name" value="Med7/Med21-like"/>
</dbReference>
<dbReference type="InterPro" id="IPR021384">
    <property type="entry name" value="Mediator_Med21"/>
</dbReference>
<dbReference type="PANTHER" id="PTHR13381:SF0">
    <property type="entry name" value="MEDIATOR OF RNA POLYMERASE II TRANSCRIPTION SUBUNIT 21"/>
    <property type="match status" value="1"/>
</dbReference>
<dbReference type="PANTHER" id="PTHR13381">
    <property type="entry name" value="RNA POLYMERASE II HOLOENZYME COMPONENT SRB7"/>
    <property type="match status" value="1"/>
</dbReference>
<dbReference type="Pfam" id="PF11221">
    <property type="entry name" value="Med21"/>
    <property type="match status" value="1"/>
</dbReference>
<dbReference type="SUPFAM" id="SSF140718">
    <property type="entry name" value="Mediator hinge subcomplex-like"/>
    <property type="match status" value="1"/>
</dbReference>
<accession>Q7PTL0</accession>
<reference key="1">
    <citation type="journal article" date="2002" name="Science">
        <title>The genome sequence of the malaria mosquito Anopheles gambiae.</title>
        <authorList>
            <person name="Holt R.A."/>
            <person name="Subramanian G.M."/>
            <person name="Halpern A."/>
            <person name="Sutton G.G."/>
            <person name="Charlab R."/>
            <person name="Nusskern D.R."/>
            <person name="Wincker P."/>
            <person name="Clark A.G."/>
            <person name="Ribeiro J.M.C."/>
            <person name="Wides R."/>
            <person name="Salzberg S.L."/>
            <person name="Loftus B.J."/>
            <person name="Yandell M.D."/>
            <person name="Majoros W.H."/>
            <person name="Rusch D.B."/>
            <person name="Lai Z."/>
            <person name="Kraft C.L."/>
            <person name="Abril J.F."/>
            <person name="Anthouard V."/>
            <person name="Arensburger P."/>
            <person name="Atkinson P.W."/>
            <person name="Baden H."/>
            <person name="de Berardinis V."/>
            <person name="Baldwin D."/>
            <person name="Benes V."/>
            <person name="Biedler J."/>
            <person name="Blass C."/>
            <person name="Bolanos R."/>
            <person name="Boscus D."/>
            <person name="Barnstead M."/>
            <person name="Cai S."/>
            <person name="Center A."/>
            <person name="Chaturverdi K."/>
            <person name="Christophides G.K."/>
            <person name="Chrystal M.A.M."/>
            <person name="Clamp M."/>
            <person name="Cravchik A."/>
            <person name="Curwen V."/>
            <person name="Dana A."/>
            <person name="Delcher A."/>
            <person name="Dew I."/>
            <person name="Evans C.A."/>
            <person name="Flanigan M."/>
            <person name="Grundschober-Freimoser A."/>
            <person name="Friedli L."/>
            <person name="Gu Z."/>
            <person name="Guan P."/>
            <person name="Guigo R."/>
            <person name="Hillenmeyer M.E."/>
            <person name="Hladun S.L."/>
            <person name="Hogan J.R."/>
            <person name="Hong Y.S."/>
            <person name="Hoover J."/>
            <person name="Jaillon O."/>
            <person name="Ke Z."/>
            <person name="Kodira C.D."/>
            <person name="Kokoza E."/>
            <person name="Koutsos A."/>
            <person name="Letunic I."/>
            <person name="Levitsky A.A."/>
            <person name="Liang Y."/>
            <person name="Lin J.-J."/>
            <person name="Lobo N.F."/>
            <person name="Lopez J.R."/>
            <person name="Malek J.A."/>
            <person name="McIntosh T.C."/>
            <person name="Meister S."/>
            <person name="Miller J.R."/>
            <person name="Mobarry C."/>
            <person name="Mongin E."/>
            <person name="Murphy S.D."/>
            <person name="O'Brochta D.A."/>
            <person name="Pfannkoch C."/>
            <person name="Qi R."/>
            <person name="Regier M.A."/>
            <person name="Remington K."/>
            <person name="Shao H."/>
            <person name="Sharakhova M.V."/>
            <person name="Sitter C.D."/>
            <person name="Shetty J."/>
            <person name="Smith T.J."/>
            <person name="Strong R."/>
            <person name="Sun J."/>
            <person name="Thomasova D."/>
            <person name="Ton L.Q."/>
            <person name="Topalis P."/>
            <person name="Tu Z.J."/>
            <person name="Unger M.F."/>
            <person name="Walenz B."/>
            <person name="Wang A.H."/>
            <person name="Wang J."/>
            <person name="Wang M."/>
            <person name="Wang X."/>
            <person name="Woodford K.J."/>
            <person name="Wortman J.R."/>
            <person name="Wu M."/>
            <person name="Yao A."/>
            <person name="Zdobnov E.M."/>
            <person name="Zhang H."/>
            <person name="Zhao Q."/>
            <person name="Zhao S."/>
            <person name="Zhu S.C."/>
            <person name="Zhimulev I."/>
            <person name="Coluzzi M."/>
            <person name="della Torre A."/>
            <person name="Roth C.W."/>
            <person name="Louis C."/>
            <person name="Kalush F."/>
            <person name="Mural R.J."/>
            <person name="Myers E.W."/>
            <person name="Adams M.D."/>
            <person name="Smith H.O."/>
            <person name="Broder S."/>
            <person name="Gardner M.J."/>
            <person name="Fraser C.M."/>
            <person name="Birney E."/>
            <person name="Bork P."/>
            <person name="Brey P.T."/>
            <person name="Venter J.C."/>
            <person name="Weissenbach J."/>
            <person name="Kafatos F.C."/>
            <person name="Collins F.H."/>
            <person name="Hoffman S.L."/>
        </authorList>
    </citation>
    <scope>NUCLEOTIDE SEQUENCE [LARGE SCALE GENOMIC DNA]</scope>
    <source>
        <strain>PEST</strain>
    </source>
</reference>
<feature type="chain" id="PRO_0000305953" description="Mediator of RNA polymerase II transcription subunit 21">
    <location>
        <begin position="1"/>
        <end position="154"/>
    </location>
</feature>
<feature type="region of interest" description="Disordered" evidence="3">
    <location>
        <begin position="37"/>
        <end position="71"/>
    </location>
</feature>
<feature type="coiled-coil region" evidence="2">
    <location>
        <begin position="96"/>
        <end position="140"/>
    </location>
</feature>
<feature type="compositionally biased region" description="Low complexity" evidence="3">
    <location>
        <begin position="44"/>
        <end position="71"/>
    </location>
</feature>